<keyword id="KW-0067">ATP-binding</keyword>
<keyword id="KW-0143">Chaperone</keyword>
<keyword id="KW-0963">Cytoplasm</keyword>
<keyword id="KW-0547">Nucleotide-binding</keyword>
<keyword id="KW-1185">Reference proteome</keyword>
<keyword id="KW-0346">Stress response</keyword>
<sequence length="624" mass="71423">MKGQETRGFQSEVKQLLHLMIHSLYSNKEIFLRELISNASDAADKLRFRALSNPDLYEGDGELRVRVSFDKDKRTLTISDNGVGMTRDEVIDHLGTIAKSGTKSFLESLGSDQAKDSQLIGQFGVGFYSAFIVADKVTVRTRAAGEKPENGVFWESAGEGEYTVADITKEDRGTEITLHLREGEDEFLDDWRVRSIISKYSDHIALPVEIEKREEKDGETVISWEKINKAQALWTRNKSEITDEEYKEFYKHIAHDFNDPLTWSHNRVEGKQEYTSLLYIPSQAPWDMWNRDHKHGLKLYVQRVFIMDDAEQFMPNYLRFVRGLIDSSDLPLNVSREILQDSTVTRNLRNALTKRVLQMLEKLAKDDAEKYQTFWQQFGLVLKEGPAEDFANQEAIAKLLRFASTHTDSSAQTVSLEDYVSRMKEGQEKIYYITADSYAAAKSSPHLELLRKKGIEVLLLSDRIDEWMMNYLTEFDGKPFQSVSKVDESLEKLADEVDESAKEAEKALTPFIDRVKALLGERVKDVRLTHRLTDTPAIVSTDADEMSTQMAKLFAAAGQKVPEVKYIFELNPDHVLVKRAADTEDEAKFSEWVELLLDQALLAERGTLEDPNLFIRRMNQLLVS</sequence>
<proteinExistence type="inferred from homology"/>
<evidence type="ECO:0000255" key="1">
    <source>
        <dbReference type="HAMAP-Rule" id="MF_00505"/>
    </source>
</evidence>
<protein>
    <recommendedName>
        <fullName evidence="1">Chaperone protein HtpG</fullName>
    </recommendedName>
    <alternativeName>
        <fullName evidence="1">Heat shock protein HtpG</fullName>
    </alternativeName>
    <alternativeName>
        <fullName evidence="1">High temperature protein G</fullName>
    </alternativeName>
</protein>
<dbReference type="EMBL" id="CP000038">
    <property type="protein sequence ID" value="AAZ87236.1"/>
    <property type="molecule type" value="Genomic_DNA"/>
</dbReference>
<dbReference type="RefSeq" id="WP_000678201.1">
    <property type="nucleotide sequence ID" value="NC_007384.1"/>
</dbReference>
<dbReference type="SMR" id="Q3Z4S6"/>
<dbReference type="GeneID" id="93776977"/>
<dbReference type="KEGG" id="ssn:SSON_0460"/>
<dbReference type="HOGENOM" id="CLU_006684_3_0_6"/>
<dbReference type="Proteomes" id="UP000002529">
    <property type="component" value="Chromosome"/>
</dbReference>
<dbReference type="GO" id="GO:0005737">
    <property type="term" value="C:cytoplasm"/>
    <property type="evidence" value="ECO:0007669"/>
    <property type="project" value="UniProtKB-SubCell"/>
</dbReference>
<dbReference type="GO" id="GO:0005524">
    <property type="term" value="F:ATP binding"/>
    <property type="evidence" value="ECO:0007669"/>
    <property type="project" value="UniProtKB-UniRule"/>
</dbReference>
<dbReference type="GO" id="GO:0016887">
    <property type="term" value="F:ATP hydrolysis activity"/>
    <property type="evidence" value="ECO:0007669"/>
    <property type="project" value="InterPro"/>
</dbReference>
<dbReference type="GO" id="GO:0140662">
    <property type="term" value="F:ATP-dependent protein folding chaperone"/>
    <property type="evidence" value="ECO:0007669"/>
    <property type="project" value="InterPro"/>
</dbReference>
<dbReference type="GO" id="GO:0051082">
    <property type="term" value="F:unfolded protein binding"/>
    <property type="evidence" value="ECO:0007669"/>
    <property type="project" value="UniProtKB-UniRule"/>
</dbReference>
<dbReference type="CDD" id="cd16927">
    <property type="entry name" value="HATPase_Hsp90-like"/>
    <property type="match status" value="1"/>
</dbReference>
<dbReference type="FunFam" id="1.20.120.790:FF:000002">
    <property type="entry name" value="Molecular chaperone HtpG"/>
    <property type="match status" value="1"/>
</dbReference>
<dbReference type="FunFam" id="3.30.230.80:FF:000002">
    <property type="entry name" value="Molecular chaperone HtpG"/>
    <property type="match status" value="1"/>
</dbReference>
<dbReference type="FunFam" id="3.30.565.10:FF:000009">
    <property type="entry name" value="Molecular chaperone HtpG"/>
    <property type="match status" value="1"/>
</dbReference>
<dbReference type="FunFam" id="3.40.50.11260:FF:000002">
    <property type="entry name" value="Molecular chaperone HtpG"/>
    <property type="match status" value="1"/>
</dbReference>
<dbReference type="Gene3D" id="3.30.230.80">
    <property type="match status" value="1"/>
</dbReference>
<dbReference type="Gene3D" id="3.40.50.11260">
    <property type="match status" value="1"/>
</dbReference>
<dbReference type="Gene3D" id="1.20.120.790">
    <property type="entry name" value="Heat shock protein 90, C-terminal domain"/>
    <property type="match status" value="1"/>
</dbReference>
<dbReference type="Gene3D" id="3.30.565.10">
    <property type="entry name" value="Histidine kinase-like ATPase, C-terminal domain"/>
    <property type="match status" value="1"/>
</dbReference>
<dbReference type="HAMAP" id="MF_00505">
    <property type="entry name" value="HSP90"/>
    <property type="match status" value="1"/>
</dbReference>
<dbReference type="InterPro" id="IPR036890">
    <property type="entry name" value="HATPase_C_sf"/>
</dbReference>
<dbReference type="InterPro" id="IPR019805">
    <property type="entry name" value="Heat_shock_protein_90_CS"/>
</dbReference>
<dbReference type="InterPro" id="IPR037196">
    <property type="entry name" value="HSP90_C"/>
</dbReference>
<dbReference type="InterPro" id="IPR001404">
    <property type="entry name" value="Hsp90_fam"/>
</dbReference>
<dbReference type="InterPro" id="IPR020575">
    <property type="entry name" value="Hsp90_N"/>
</dbReference>
<dbReference type="InterPro" id="IPR020568">
    <property type="entry name" value="Ribosomal_Su5_D2-typ_SF"/>
</dbReference>
<dbReference type="NCBIfam" id="NF003555">
    <property type="entry name" value="PRK05218.1"/>
    <property type="match status" value="1"/>
</dbReference>
<dbReference type="PANTHER" id="PTHR11528">
    <property type="entry name" value="HEAT SHOCK PROTEIN 90 FAMILY MEMBER"/>
    <property type="match status" value="1"/>
</dbReference>
<dbReference type="Pfam" id="PF13589">
    <property type="entry name" value="HATPase_c_3"/>
    <property type="match status" value="1"/>
</dbReference>
<dbReference type="Pfam" id="PF00183">
    <property type="entry name" value="HSP90"/>
    <property type="match status" value="1"/>
</dbReference>
<dbReference type="PIRSF" id="PIRSF002583">
    <property type="entry name" value="Hsp90"/>
    <property type="match status" value="1"/>
</dbReference>
<dbReference type="PRINTS" id="PR00775">
    <property type="entry name" value="HEATSHOCK90"/>
</dbReference>
<dbReference type="SMART" id="SM00387">
    <property type="entry name" value="HATPase_c"/>
    <property type="match status" value="1"/>
</dbReference>
<dbReference type="SUPFAM" id="SSF55874">
    <property type="entry name" value="ATPase domain of HSP90 chaperone/DNA topoisomerase II/histidine kinase"/>
    <property type="match status" value="1"/>
</dbReference>
<dbReference type="SUPFAM" id="SSF110942">
    <property type="entry name" value="HSP90 C-terminal domain"/>
    <property type="match status" value="1"/>
</dbReference>
<dbReference type="SUPFAM" id="SSF54211">
    <property type="entry name" value="Ribosomal protein S5 domain 2-like"/>
    <property type="match status" value="1"/>
</dbReference>
<dbReference type="PROSITE" id="PS00298">
    <property type="entry name" value="HSP90"/>
    <property type="match status" value="1"/>
</dbReference>
<feature type="chain" id="PRO_0000224233" description="Chaperone protein HtpG">
    <location>
        <begin position="1"/>
        <end position="624"/>
    </location>
</feature>
<feature type="region of interest" description="A; substrate-binding" evidence="1">
    <location>
        <begin position="1"/>
        <end position="336"/>
    </location>
</feature>
<feature type="region of interest" description="B" evidence="1">
    <location>
        <begin position="337"/>
        <end position="552"/>
    </location>
</feature>
<feature type="region of interest" description="C" evidence="1">
    <location>
        <begin position="553"/>
        <end position="624"/>
    </location>
</feature>
<reference key="1">
    <citation type="journal article" date="2005" name="Nucleic Acids Res.">
        <title>Genome dynamics and diversity of Shigella species, the etiologic agents of bacillary dysentery.</title>
        <authorList>
            <person name="Yang F."/>
            <person name="Yang J."/>
            <person name="Zhang X."/>
            <person name="Chen L."/>
            <person name="Jiang Y."/>
            <person name="Yan Y."/>
            <person name="Tang X."/>
            <person name="Wang J."/>
            <person name="Xiong Z."/>
            <person name="Dong J."/>
            <person name="Xue Y."/>
            <person name="Zhu Y."/>
            <person name="Xu X."/>
            <person name="Sun L."/>
            <person name="Chen S."/>
            <person name="Nie H."/>
            <person name="Peng J."/>
            <person name="Xu J."/>
            <person name="Wang Y."/>
            <person name="Yuan Z."/>
            <person name="Wen Y."/>
            <person name="Yao Z."/>
            <person name="Shen Y."/>
            <person name="Qiang B."/>
            <person name="Hou Y."/>
            <person name="Yu J."/>
            <person name="Jin Q."/>
        </authorList>
    </citation>
    <scope>NUCLEOTIDE SEQUENCE [LARGE SCALE GENOMIC DNA]</scope>
    <source>
        <strain>Ss046</strain>
    </source>
</reference>
<comment type="function">
    <text evidence="1">Molecular chaperone. Has ATPase activity.</text>
</comment>
<comment type="subunit">
    <text evidence="1">Homodimer.</text>
</comment>
<comment type="subcellular location">
    <subcellularLocation>
        <location evidence="1">Cytoplasm</location>
    </subcellularLocation>
</comment>
<comment type="similarity">
    <text evidence="1">Belongs to the heat shock protein 90 family.</text>
</comment>
<accession>Q3Z4S6</accession>
<gene>
    <name evidence="1" type="primary">htpG</name>
    <name type="ordered locus">SSON_0460</name>
</gene>
<name>HTPG_SHISS</name>
<organism>
    <name type="scientific">Shigella sonnei (strain Ss046)</name>
    <dbReference type="NCBI Taxonomy" id="300269"/>
    <lineage>
        <taxon>Bacteria</taxon>
        <taxon>Pseudomonadati</taxon>
        <taxon>Pseudomonadota</taxon>
        <taxon>Gammaproteobacteria</taxon>
        <taxon>Enterobacterales</taxon>
        <taxon>Enterobacteriaceae</taxon>
        <taxon>Shigella</taxon>
    </lineage>
</organism>